<gene>
    <name evidence="1" type="primary">prfA</name>
    <name type="ordered locus">HY04AAS1_0980</name>
</gene>
<keyword id="KW-0963">Cytoplasm</keyword>
<keyword id="KW-0488">Methylation</keyword>
<keyword id="KW-0648">Protein biosynthesis</keyword>
<organism>
    <name type="scientific">Hydrogenobaculum sp. (strain Y04AAS1)</name>
    <dbReference type="NCBI Taxonomy" id="380749"/>
    <lineage>
        <taxon>Bacteria</taxon>
        <taxon>Pseudomonadati</taxon>
        <taxon>Aquificota</taxon>
        <taxon>Aquificia</taxon>
        <taxon>Aquificales</taxon>
        <taxon>Aquificaceae</taxon>
        <taxon>Hydrogenobaculum</taxon>
    </lineage>
</organism>
<reference key="1">
    <citation type="journal article" date="2009" name="J. Bacteriol.">
        <title>Complete and draft genome sequences of six members of the Aquificales.</title>
        <authorList>
            <person name="Reysenbach A.-L."/>
            <person name="Hamamura N."/>
            <person name="Podar M."/>
            <person name="Griffiths E."/>
            <person name="Ferreira S."/>
            <person name="Hochstein R."/>
            <person name="Heidelberg J."/>
            <person name="Johnson J."/>
            <person name="Mead D."/>
            <person name="Pohorille A."/>
            <person name="Sarmiento M."/>
            <person name="Schweighofer K."/>
            <person name="Seshadri R."/>
            <person name="Voytek M.A."/>
        </authorList>
    </citation>
    <scope>NUCLEOTIDE SEQUENCE [LARGE SCALE GENOMIC DNA]</scope>
    <source>
        <strain>Y04AAS1</strain>
    </source>
</reference>
<sequence>MLPKNFLEKIQDIEQKYAQTEEKLASLDITKDADTYKALSKDLKELSYIHELYKDYNKILKDIEDTKELLKDKDLRELAEKELENLNTKLLQKEKELINVLTPKDANDSKNVILEIRAGAGGEEAALFAADLLRMYQRYAERKGWKFNILEANKTGLGGYKEVIVSIEGKNVYSHLKYESGVHRVQRVPITESGGRIHTSTITVAVLPEADETDVVINPQDLRIETFRASGAGGQYVNTTESAVRITHIPTGISISCQDERSQLQNKLKAMRILYARLKDFYEKQKKEETDKERKEQVGTGERSEKIRTYNFSQNRVTDHRINLTLHKLQDVLDGDLDDIISSLQAKELEEKLASA</sequence>
<feature type="chain" id="PRO_1000093464" description="Peptide chain release factor 1">
    <location>
        <begin position="1"/>
        <end position="356"/>
    </location>
</feature>
<feature type="modified residue" description="N5-methylglutamine" evidence="1">
    <location>
        <position position="235"/>
    </location>
</feature>
<evidence type="ECO:0000255" key="1">
    <source>
        <dbReference type="HAMAP-Rule" id="MF_00093"/>
    </source>
</evidence>
<accession>B4U955</accession>
<name>RF1_HYDS0</name>
<comment type="function">
    <text evidence="1">Peptide chain release factor 1 directs the termination of translation in response to the peptide chain termination codons UAG and UAA.</text>
</comment>
<comment type="subcellular location">
    <subcellularLocation>
        <location evidence="1">Cytoplasm</location>
    </subcellularLocation>
</comment>
<comment type="PTM">
    <text evidence="1">Methylated by PrmC. Methylation increases the termination efficiency of RF1.</text>
</comment>
<comment type="similarity">
    <text evidence="1">Belongs to the prokaryotic/mitochondrial release factor family.</text>
</comment>
<proteinExistence type="inferred from homology"/>
<dbReference type="EMBL" id="CP001130">
    <property type="protein sequence ID" value="ACG57666.1"/>
    <property type="molecule type" value="Genomic_DNA"/>
</dbReference>
<dbReference type="RefSeq" id="WP_012514022.1">
    <property type="nucleotide sequence ID" value="NC_011126.1"/>
</dbReference>
<dbReference type="SMR" id="B4U955"/>
<dbReference type="STRING" id="380749.HY04AAS1_0980"/>
<dbReference type="KEGG" id="hya:HY04AAS1_0980"/>
<dbReference type="eggNOG" id="COG0216">
    <property type="taxonomic scope" value="Bacteria"/>
</dbReference>
<dbReference type="HOGENOM" id="CLU_036856_0_1_0"/>
<dbReference type="OrthoDB" id="9806673at2"/>
<dbReference type="GO" id="GO:0005737">
    <property type="term" value="C:cytoplasm"/>
    <property type="evidence" value="ECO:0007669"/>
    <property type="project" value="UniProtKB-SubCell"/>
</dbReference>
<dbReference type="GO" id="GO:0016149">
    <property type="term" value="F:translation release factor activity, codon specific"/>
    <property type="evidence" value="ECO:0007669"/>
    <property type="project" value="UniProtKB-UniRule"/>
</dbReference>
<dbReference type="FunFam" id="3.30.160.20:FF:000004">
    <property type="entry name" value="Peptide chain release factor 1"/>
    <property type="match status" value="1"/>
</dbReference>
<dbReference type="FunFam" id="3.30.70.1660:FF:000002">
    <property type="entry name" value="Peptide chain release factor 1"/>
    <property type="match status" value="1"/>
</dbReference>
<dbReference type="FunFam" id="3.30.70.1660:FF:000004">
    <property type="entry name" value="Peptide chain release factor 1"/>
    <property type="match status" value="1"/>
</dbReference>
<dbReference type="Gene3D" id="3.30.160.20">
    <property type="match status" value="1"/>
</dbReference>
<dbReference type="Gene3D" id="3.30.70.1660">
    <property type="match status" value="1"/>
</dbReference>
<dbReference type="Gene3D" id="6.10.140.1950">
    <property type="match status" value="1"/>
</dbReference>
<dbReference type="HAMAP" id="MF_00093">
    <property type="entry name" value="Rel_fac_1"/>
    <property type="match status" value="1"/>
</dbReference>
<dbReference type="InterPro" id="IPR005139">
    <property type="entry name" value="PCRF"/>
</dbReference>
<dbReference type="InterPro" id="IPR000352">
    <property type="entry name" value="Pep_chain_release_fac_I"/>
</dbReference>
<dbReference type="InterPro" id="IPR045853">
    <property type="entry name" value="Pep_chain_release_fac_I_sf"/>
</dbReference>
<dbReference type="InterPro" id="IPR050057">
    <property type="entry name" value="Prokaryotic/Mito_RF"/>
</dbReference>
<dbReference type="InterPro" id="IPR004373">
    <property type="entry name" value="RF-1"/>
</dbReference>
<dbReference type="NCBIfam" id="TIGR00019">
    <property type="entry name" value="prfA"/>
    <property type="match status" value="1"/>
</dbReference>
<dbReference type="NCBIfam" id="NF001859">
    <property type="entry name" value="PRK00591.1"/>
    <property type="match status" value="1"/>
</dbReference>
<dbReference type="PANTHER" id="PTHR43804">
    <property type="entry name" value="LD18447P"/>
    <property type="match status" value="1"/>
</dbReference>
<dbReference type="PANTHER" id="PTHR43804:SF7">
    <property type="entry name" value="LD18447P"/>
    <property type="match status" value="1"/>
</dbReference>
<dbReference type="Pfam" id="PF03462">
    <property type="entry name" value="PCRF"/>
    <property type="match status" value="1"/>
</dbReference>
<dbReference type="Pfam" id="PF00472">
    <property type="entry name" value="RF-1"/>
    <property type="match status" value="1"/>
</dbReference>
<dbReference type="SMART" id="SM00937">
    <property type="entry name" value="PCRF"/>
    <property type="match status" value="1"/>
</dbReference>
<dbReference type="SUPFAM" id="SSF75620">
    <property type="entry name" value="Release factor"/>
    <property type="match status" value="1"/>
</dbReference>
<dbReference type="PROSITE" id="PS00745">
    <property type="entry name" value="RF_PROK_I"/>
    <property type="match status" value="1"/>
</dbReference>
<protein>
    <recommendedName>
        <fullName evidence="1">Peptide chain release factor 1</fullName>
        <shortName evidence="1">RF-1</shortName>
    </recommendedName>
</protein>